<comment type="function">
    <text evidence="1">F(1)F(0) ATP synthase produces ATP from ADP in the presence of a proton or sodium gradient. F-type ATPases consist of two structural domains, F(1) containing the extramembraneous catalytic core and F(0) containing the membrane proton channel, linked together by a central stalk and a peripheral stalk. During catalysis, ATP synthesis in the catalytic domain of F(1) is coupled via a rotary mechanism of the central stalk subunits to proton translocation.</text>
</comment>
<comment type="function">
    <text evidence="1">Key component of the F(0) channel; it plays a direct role in translocation across the membrane. A homomeric c-ring of between 10-14 subunits forms the central stalk rotor element with the F(1) delta and epsilon subunits.</text>
</comment>
<comment type="subunit">
    <text evidence="1">F-type ATPases have 2 components, F(1) - the catalytic core - and F(0) - the membrane proton channel. F(1) has five subunits: alpha(3), beta(3), gamma(1), delta(1), epsilon(1). F(0) has three main subunits: a(1), b(2) and c(10-14). The alpha and beta chains form an alternating ring which encloses part of the gamma chain. F(1) is attached to F(0) by a central stalk formed by the gamma and epsilon chains, while a peripheral stalk is formed by the delta and b chains.</text>
</comment>
<comment type="subcellular location">
    <subcellularLocation>
        <location evidence="1">Cell inner membrane</location>
        <topology evidence="1">Multi-pass membrane protein</topology>
    </subcellularLocation>
</comment>
<comment type="similarity">
    <text evidence="1">Belongs to the ATPase C chain family.</text>
</comment>
<sequence>MEFFTMCVLAAGIGMALGTLGTGIGQGLAVKSAVEGTSRNPGASGKILTTMMIGLAMIESLAIYALVVCLIILFANPYKDIALELAKSVAK</sequence>
<feature type="chain" id="PRO_1000215160" description="ATP synthase subunit c">
    <location>
        <begin position="1"/>
        <end position="91"/>
    </location>
</feature>
<feature type="transmembrane region" description="Helical" evidence="1">
    <location>
        <begin position="4"/>
        <end position="24"/>
    </location>
</feature>
<feature type="transmembrane region" description="Helical" evidence="1">
    <location>
        <begin position="53"/>
        <end position="73"/>
    </location>
</feature>
<feature type="site" description="Reversibly protonated during proton transport" evidence="1">
    <location>
        <position position="59"/>
    </location>
</feature>
<name>ATPL_GEOSM</name>
<proteinExistence type="inferred from homology"/>
<accession>C6E8P1</accession>
<protein>
    <recommendedName>
        <fullName evidence="1">ATP synthase subunit c</fullName>
    </recommendedName>
    <alternativeName>
        <fullName evidence="1">ATP synthase F(0) sector subunit c</fullName>
    </alternativeName>
    <alternativeName>
        <fullName evidence="1">F-type ATPase subunit c</fullName>
        <shortName evidence="1">F-ATPase subunit c</shortName>
    </alternativeName>
    <alternativeName>
        <fullName evidence="1">Lipid-binding protein</fullName>
    </alternativeName>
</protein>
<gene>
    <name evidence="1" type="primary">atpE</name>
    <name type="ordered locus">GM21_4016</name>
</gene>
<reference key="1">
    <citation type="submission" date="2009-07" db="EMBL/GenBank/DDBJ databases">
        <title>Complete sequence of Geobacter sp. M21.</title>
        <authorList>
            <consortium name="US DOE Joint Genome Institute"/>
            <person name="Lucas S."/>
            <person name="Copeland A."/>
            <person name="Lapidus A."/>
            <person name="Glavina del Rio T."/>
            <person name="Dalin E."/>
            <person name="Tice H."/>
            <person name="Bruce D."/>
            <person name="Goodwin L."/>
            <person name="Pitluck S."/>
            <person name="Saunders E."/>
            <person name="Brettin T."/>
            <person name="Detter J.C."/>
            <person name="Han C."/>
            <person name="Larimer F."/>
            <person name="Land M."/>
            <person name="Hauser L."/>
            <person name="Kyrpides N."/>
            <person name="Ovchinnikova G."/>
            <person name="Lovley D."/>
        </authorList>
    </citation>
    <scope>NUCLEOTIDE SEQUENCE [LARGE SCALE GENOMIC DNA]</scope>
    <source>
        <strain>M21</strain>
    </source>
</reference>
<dbReference type="EMBL" id="CP001661">
    <property type="protein sequence ID" value="ACT20032.1"/>
    <property type="molecule type" value="Genomic_DNA"/>
</dbReference>
<dbReference type="SMR" id="C6E8P1"/>
<dbReference type="STRING" id="443144.GM21_4016"/>
<dbReference type="KEGG" id="gem:GM21_4016"/>
<dbReference type="eggNOG" id="COG0636">
    <property type="taxonomic scope" value="Bacteria"/>
</dbReference>
<dbReference type="HOGENOM" id="CLU_148047_2_0_7"/>
<dbReference type="OrthoDB" id="5296711at2"/>
<dbReference type="GO" id="GO:0005886">
    <property type="term" value="C:plasma membrane"/>
    <property type="evidence" value="ECO:0007669"/>
    <property type="project" value="UniProtKB-SubCell"/>
</dbReference>
<dbReference type="GO" id="GO:0045259">
    <property type="term" value="C:proton-transporting ATP synthase complex"/>
    <property type="evidence" value="ECO:0007669"/>
    <property type="project" value="UniProtKB-KW"/>
</dbReference>
<dbReference type="GO" id="GO:0033177">
    <property type="term" value="C:proton-transporting two-sector ATPase complex, proton-transporting domain"/>
    <property type="evidence" value="ECO:0007669"/>
    <property type="project" value="InterPro"/>
</dbReference>
<dbReference type="GO" id="GO:0008289">
    <property type="term" value="F:lipid binding"/>
    <property type="evidence" value="ECO:0007669"/>
    <property type="project" value="UniProtKB-KW"/>
</dbReference>
<dbReference type="GO" id="GO:0046933">
    <property type="term" value="F:proton-transporting ATP synthase activity, rotational mechanism"/>
    <property type="evidence" value="ECO:0007669"/>
    <property type="project" value="UniProtKB-UniRule"/>
</dbReference>
<dbReference type="CDD" id="cd18121">
    <property type="entry name" value="ATP-synt_Fo_c"/>
    <property type="match status" value="1"/>
</dbReference>
<dbReference type="Gene3D" id="1.20.120.610">
    <property type="entry name" value="lithium bound rotor ring of v- atpase"/>
    <property type="match status" value="1"/>
</dbReference>
<dbReference type="HAMAP" id="MF_01396">
    <property type="entry name" value="ATP_synth_c_bact"/>
    <property type="match status" value="1"/>
</dbReference>
<dbReference type="InterPro" id="IPR005953">
    <property type="entry name" value="ATP_synth_csu_bac/chlpt"/>
</dbReference>
<dbReference type="InterPro" id="IPR000454">
    <property type="entry name" value="ATP_synth_F0_csu"/>
</dbReference>
<dbReference type="InterPro" id="IPR020537">
    <property type="entry name" value="ATP_synth_F0_csu_DDCD_BS"/>
</dbReference>
<dbReference type="InterPro" id="IPR002379">
    <property type="entry name" value="ATPase_proteolipid_c-like_dom"/>
</dbReference>
<dbReference type="InterPro" id="IPR035921">
    <property type="entry name" value="F/V-ATP_Csub_sf"/>
</dbReference>
<dbReference type="NCBIfam" id="TIGR01260">
    <property type="entry name" value="ATP_synt_c"/>
    <property type="match status" value="1"/>
</dbReference>
<dbReference type="PANTHER" id="PTHR10031">
    <property type="entry name" value="ATP SYNTHASE LIPID-BINDING PROTEIN, MITOCHONDRIAL"/>
    <property type="match status" value="1"/>
</dbReference>
<dbReference type="PANTHER" id="PTHR10031:SF0">
    <property type="entry name" value="ATPASE PROTEIN 9"/>
    <property type="match status" value="1"/>
</dbReference>
<dbReference type="Pfam" id="PF00137">
    <property type="entry name" value="ATP-synt_C"/>
    <property type="match status" value="1"/>
</dbReference>
<dbReference type="PRINTS" id="PR00124">
    <property type="entry name" value="ATPASEC"/>
</dbReference>
<dbReference type="SUPFAM" id="SSF81333">
    <property type="entry name" value="F1F0 ATP synthase subunit C"/>
    <property type="match status" value="1"/>
</dbReference>
<dbReference type="PROSITE" id="PS00605">
    <property type="entry name" value="ATPASE_C"/>
    <property type="match status" value="1"/>
</dbReference>
<organism>
    <name type="scientific">Geobacter sp. (strain M21)</name>
    <dbReference type="NCBI Taxonomy" id="443144"/>
    <lineage>
        <taxon>Bacteria</taxon>
        <taxon>Pseudomonadati</taxon>
        <taxon>Thermodesulfobacteriota</taxon>
        <taxon>Desulfuromonadia</taxon>
        <taxon>Geobacterales</taxon>
        <taxon>Geobacteraceae</taxon>
        <taxon>Geobacter</taxon>
    </lineage>
</organism>
<evidence type="ECO:0000255" key="1">
    <source>
        <dbReference type="HAMAP-Rule" id="MF_01396"/>
    </source>
</evidence>
<keyword id="KW-0066">ATP synthesis</keyword>
<keyword id="KW-0997">Cell inner membrane</keyword>
<keyword id="KW-1003">Cell membrane</keyword>
<keyword id="KW-0138">CF(0)</keyword>
<keyword id="KW-0375">Hydrogen ion transport</keyword>
<keyword id="KW-0406">Ion transport</keyword>
<keyword id="KW-0446">Lipid-binding</keyword>
<keyword id="KW-0472">Membrane</keyword>
<keyword id="KW-0812">Transmembrane</keyword>
<keyword id="KW-1133">Transmembrane helix</keyword>
<keyword id="KW-0813">Transport</keyword>